<organism>
    <name type="scientific">Escherichia coli (strain K12)</name>
    <dbReference type="NCBI Taxonomy" id="83333"/>
    <lineage>
        <taxon>Bacteria</taxon>
        <taxon>Pseudomonadati</taxon>
        <taxon>Pseudomonadota</taxon>
        <taxon>Gammaproteobacteria</taxon>
        <taxon>Enterobacterales</taxon>
        <taxon>Enterobacteriaceae</taxon>
        <taxon>Escherichia</taxon>
    </lineage>
</organism>
<sequence>MQILADLLNTIPAIDSTAMSRAQRHIDGLLKPVGSLGKLEVLAIQLAGMPGLNGIPHVGKKAVLVMCADHGVWEEGVAISPKEVTAIQAENMTRGTTGVCVLAEQAGANVHVIDVGIDTAEPIPGLINMRVARGSGNIASAPAMSRRQAEKLLLDVICYTQELAKNGVTLFGVGELGMANTTPAAAIVSTITGRDPEEVVGIGANLPTDKLANKIDVVRRAITLNQPNPQDGVDVLAKVGGFDLVGIAGVMLGAASCGLPVLLDGFLSYAAALAACQMSPAIKPYLIPSHLSAEKGARIALSHLGLEPYLNMEMRLGEGSGAALAMPIIEAACAIYNNMGELAASNIVLPGNTTSDLNS</sequence>
<evidence type="ECO:0000250" key="1"/>
<evidence type="ECO:0000305" key="2"/>
<keyword id="KW-0169">Cobalamin biosynthesis</keyword>
<keyword id="KW-0328">Glycosyltransferase</keyword>
<keyword id="KW-1185">Reference proteome</keyword>
<keyword id="KW-0808">Transferase</keyword>
<accession>P36562</accession>
<accession>P78075</accession>
<proteinExistence type="inferred from homology"/>
<comment type="function">
    <text>Catalyzes the synthesis of alpha-ribazole-5'-phosphate from nicotinate mononucleotide (NAMN) and 5,6-dimethylbenzimidazole (DMB).</text>
</comment>
<comment type="catalytic activity">
    <reaction>
        <text>5,6-dimethylbenzimidazole + nicotinate beta-D-ribonucleotide = alpha-ribazole 5'-phosphate + nicotinate + H(+)</text>
        <dbReference type="Rhea" id="RHEA:11196"/>
        <dbReference type="ChEBI" id="CHEBI:15378"/>
        <dbReference type="ChEBI" id="CHEBI:15890"/>
        <dbReference type="ChEBI" id="CHEBI:32544"/>
        <dbReference type="ChEBI" id="CHEBI:57502"/>
        <dbReference type="ChEBI" id="CHEBI:57918"/>
        <dbReference type="EC" id="2.4.2.21"/>
    </reaction>
</comment>
<comment type="pathway">
    <text>Nucleoside biosynthesis; alpha-ribazole biosynthesis; alpha-ribazole from 5,6-dimethylbenzimidazole: step 1/2.</text>
</comment>
<comment type="subunit">
    <text evidence="1">Homodimer.</text>
</comment>
<comment type="similarity">
    <text evidence="2">Belongs to the CobT family.</text>
</comment>
<dbReference type="EC" id="2.4.2.21"/>
<dbReference type="EMBL" id="U33333">
    <property type="protein sequence ID" value="AAA78908.1"/>
    <property type="molecule type" value="Genomic_DNA"/>
</dbReference>
<dbReference type="EMBL" id="U00096">
    <property type="protein sequence ID" value="AAC75052.1"/>
    <property type="molecule type" value="Genomic_DNA"/>
</dbReference>
<dbReference type="EMBL" id="AP009048">
    <property type="protein sequence ID" value="BAA15808.1"/>
    <property type="molecule type" value="Genomic_DNA"/>
</dbReference>
<dbReference type="EMBL" id="L25054">
    <property type="protein sequence ID" value="AAA56876.1"/>
    <property type="molecule type" value="Genomic_DNA"/>
</dbReference>
<dbReference type="PIR" id="F64963">
    <property type="entry name" value="F64963"/>
</dbReference>
<dbReference type="RefSeq" id="NP_416495.1">
    <property type="nucleotide sequence ID" value="NC_000913.3"/>
</dbReference>
<dbReference type="RefSeq" id="WP_001166160.1">
    <property type="nucleotide sequence ID" value="NZ_SSUV01000031.1"/>
</dbReference>
<dbReference type="SMR" id="P36562"/>
<dbReference type="BioGRID" id="4262028">
    <property type="interactions" value="21"/>
</dbReference>
<dbReference type="FunCoup" id="P36562">
    <property type="interactions" value="160"/>
</dbReference>
<dbReference type="IntAct" id="P36562">
    <property type="interactions" value="5"/>
</dbReference>
<dbReference type="STRING" id="511145.b1991"/>
<dbReference type="jPOST" id="P36562"/>
<dbReference type="PaxDb" id="511145-b1991"/>
<dbReference type="EnsemblBacteria" id="AAC75052">
    <property type="protein sequence ID" value="AAC75052"/>
    <property type="gene ID" value="b1991"/>
</dbReference>
<dbReference type="GeneID" id="946517"/>
<dbReference type="KEGG" id="ecj:JW1969"/>
<dbReference type="KEGG" id="eco:b1991"/>
<dbReference type="KEGG" id="ecoc:C3026_11235"/>
<dbReference type="PATRIC" id="fig|1411691.4.peg.263"/>
<dbReference type="EchoBASE" id="EB2071"/>
<dbReference type="eggNOG" id="COG2038">
    <property type="taxonomic scope" value="Bacteria"/>
</dbReference>
<dbReference type="HOGENOM" id="CLU_002982_0_0_6"/>
<dbReference type="InParanoid" id="P36562"/>
<dbReference type="OMA" id="AWMRKCA"/>
<dbReference type="OrthoDB" id="9781491at2"/>
<dbReference type="PhylomeDB" id="P36562"/>
<dbReference type="BioCyc" id="EcoCyc:DMBPPRIBOSYLTRANS-MONOMER"/>
<dbReference type="UniPathway" id="UPA00061">
    <property type="reaction ID" value="UER00516"/>
</dbReference>
<dbReference type="PRO" id="PR:P36562"/>
<dbReference type="Proteomes" id="UP000000625">
    <property type="component" value="Chromosome"/>
</dbReference>
<dbReference type="GO" id="GO:0008939">
    <property type="term" value="F:nicotinate-nucleotide-dimethylbenzimidazole phosphoribosyltransferase activity"/>
    <property type="evidence" value="ECO:0000269"/>
    <property type="project" value="EcoCyc"/>
</dbReference>
<dbReference type="GO" id="GO:0009236">
    <property type="term" value="P:cobalamin biosynthetic process"/>
    <property type="evidence" value="ECO:0000315"/>
    <property type="project" value="EcoliWiki"/>
</dbReference>
<dbReference type="CDD" id="cd02439">
    <property type="entry name" value="DMB-PRT_CobT"/>
    <property type="match status" value="1"/>
</dbReference>
<dbReference type="FunFam" id="1.10.1610.10:FF:000001">
    <property type="entry name" value="Nicotinate-nucleotide--dimethylbenzimidazole phosphoribosyltransferase"/>
    <property type="match status" value="1"/>
</dbReference>
<dbReference type="FunFam" id="3.40.50.10210:FF:000001">
    <property type="entry name" value="Nicotinate-nucleotide--dimethylbenzimidazole phosphoribosyltransferase"/>
    <property type="match status" value="1"/>
</dbReference>
<dbReference type="Gene3D" id="1.10.1610.10">
    <property type="match status" value="1"/>
</dbReference>
<dbReference type="Gene3D" id="3.40.50.10210">
    <property type="match status" value="1"/>
</dbReference>
<dbReference type="HAMAP" id="MF_00230">
    <property type="entry name" value="CobT"/>
    <property type="match status" value="1"/>
</dbReference>
<dbReference type="InterPro" id="IPR003200">
    <property type="entry name" value="Nict_dMeBzImd_PRibTrfase"/>
</dbReference>
<dbReference type="InterPro" id="IPR017846">
    <property type="entry name" value="Nict_dMeBzImd_PRibTrfase_bact"/>
</dbReference>
<dbReference type="InterPro" id="IPR023195">
    <property type="entry name" value="Nict_dMeBzImd_PRibTrfase_N"/>
</dbReference>
<dbReference type="InterPro" id="IPR036087">
    <property type="entry name" value="Nict_dMeBzImd_PRibTrfase_sf"/>
</dbReference>
<dbReference type="NCBIfam" id="TIGR03160">
    <property type="entry name" value="cobT_DBIPRT"/>
    <property type="match status" value="1"/>
</dbReference>
<dbReference type="NCBIfam" id="NF000996">
    <property type="entry name" value="PRK00105.1"/>
    <property type="match status" value="1"/>
</dbReference>
<dbReference type="PANTHER" id="PTHR43463">
    <property type="entry name" value="NICOTINATE-NUCLEOTIDE--DIMETHYLBENZIMIDAZOLE PHOSPHORIBOSYLTRANSFERASE"/>
    <property type="match status" value="1"/>
</dbReference>
<dbReference type="PANTHER" id="PTHR43463:SF1">
    <property type="entry name" value="NICOTINATE-NUCLEOTIDE--DIMETHYLBENZIMIDAZOLE PHOSPHORIBOSYLTRANSFERASE"/>
    <property type="match status" value="1"/>
</dbReference>
<dbReference type="Pfam" id="PF02277">
    <property type="entry name" value="DBI_PRT"/>
    <property type="match status" value="1"/>
</dbReference>
<dbReference type="SUPFAM" id="SSF52733">
    <property type="entry name" value="Nicotinate mononucleotide:5,6-dimethylbenzimidazole phosphoribosyltransferase (CobT)"/>
    <property type="match status" value="1"/>
</dbReference>
<protein>
    <recommendedName>
        <fullName>Nicotinate-nucleotide--dimethylbenzimidazole phosphoribosyltransferase</fullName>
        <shortName>NN:DBI PRT</shortName>
        <ecNumber>2.4.2.21</ecNumber>
    </recommendedName>
    <alternativeName>
        <fullName>N(1)-alpha-phosphoribosyltransferase</fullName>
    </alternativeName>
</protein>
<name>COBT_ECOLI</name>
<feature type="chain" id="PRO_0000167048" description="Nicotinate-nucleotide--dimethylbenzimidazole phosphoribosyltransferase">
    <location>
        <begin position="1"/>
        <end position="359"/>
    </location>
</feature>
<feature type="active site" description="Proton acceptor" evidence="1">
    <location>
        <position position="318"/>
    </location>
</feature>
<feature type="sequence conflict" description="In Ref. 1; AAA78908." evidence="2" ref="1">
    <original>A</original>
    <variation>L</variation>
    <location>
        <position position="271"/>
    </location>
</feature>
<feature type="sequence conflict" description="In Ref. 1; AAA78908." evidence="2" ref="1">
    <original>L</original>
    <variation>V</variation>
    <location>
        <position position="301"/>
    </location>
</feature>
<gene>
    <name type="primary">cobT</name>
    <name type="ordered locus">b1991</name>
    <name type="ordered locus">JW1969</name>
</gene>
<reference key="1">
    <citation type="journal article" date="1995" name="J. Bacteriol.">
        <title>The cobalamin (coenzyme B12) biosynthetic genes of Escherichia coli.</title>
        <authorList>
            <person name="Lawrence J.G."/>
            <person name="Roth J.R."/>
        </authorList>
    </citation>
    <scope>NUCLEOTIDE SEQUENCE [GENOMIC DNA]</scope>
    <source>
        <strain>K12 / W3110 / ATCC 27325 / DSM 5911</strain>
    </source>
</reference>
<reference key="2">
    <citation type="journal article" date="1996" name="DNA Res.">
        <title>A 460-kb DNA sequence of the Escherichia coli K-12 genome corresponding to the 40.1-50.0 min region on the linkage map.</title>
        <authorList>
            <person name="Itoh T."/>
            <person name="Aiba H."/>
            <person name="Baba T."/>
            <person name="Fujita K."/>
            <person name="Hayashi K."/>
            <person name="Inada T."/>
            <person name="Isono K."/>
            <person name="Kasai H."/>
            <person name="Kimura S."/>
            <person name="Kitakawa M."/>
            <person name="Kitagawa M."/>
            <person name="Makino K."/>
            <person name="Miki T."/>
            <person name="Mizobuchi K."/>
            <person name="Mori H."/>
            <person name="Mori T."/>
            <person name="Motomura K."/>
            <person name="Nakade S."/>
            <person name="Nakamura Y."/>
            <person name="Nashimoto H."/>
            <person name="Nishio Y."/>
            <person name="Oshima T."/>
            <person name="Saito N."/>
            <person name="Sampei G."/>
            <person name="Seki Y."/>
            <person name="Sivasundaram S."/>
            <person name="Tagami H."/>
            <person name="Takeda J."/>
            <person name="Takemoto K."/>
            <person name="Wada C."/>
            <person name="Yamamoto Y."/>
            <person name="Horiuchi T."/>
        </authorList>
    </citation>
    <scope>NUCLEOTIDE SEQUENCE [LARGE SCALE GENOMIC DNA]</scope>
    <source>
        <strain>K12 / W3110 / ATCC 27325 / DSM 5911</strain>
    </source>
</reference>
<reference key="3">
    <citation type="journal article" date="1997" name="Science">
        <title>The complete genome sequence of Escherichia coli K-12.</title>
        <authorList>
            <person name="Blattner F.R."/>
            <person name="Plunkett G. III"/>
            <person name="Bloch C.A."/>
            <person name="Perna N.T."/>
            <person name="Burland V."/>
            <person name="Riley M."/>
            <person name="Collado-Vides J."/>
            <person name="Glasner J.D."/>
            <person name="Rode C.K."/>
            <person name="Mayhew G.F."/>
            <person name="Gregor J."/>
            <person name="Davis N.W."/>
            <person name="Kirkpatrick H.A."/>
            <person name="Goeden M.A."/>
            <person name="Rose D.J."/>
            <person name="Mau B."/>
            <person name="Shao Y."/>
        </authorList>
    </citation>
    <scope>NUCLEOTIDE SEQUENCE [LARGE SCALE GENOMIC DNA]</scope>
    <source>
        <strain>K12 / MG1655 / ATCC 47076</strain>
    </source>
</reference>
<reference key="4">
    <citation type="journal article" date="2006" name="Mol. Syst. Biol.">
        <title>Highly accurate genome sequences of Escherichia coli K-12 strains MG1655 and W3110.</title>
        <authorList>
            <person name="Hayashi K."/>
            <person name="Morooka N."/>
            <person name="Yamamoto Y."/>
            <person name="Fujita K."/>
            <person name="Isono K."/>
            <person name="Choi S."/>
            <person name="Ohtsubo E."/>
            <person name="Baba T."/>
            <person name="Wanner B.L."/>
            <person name="Mori H."/>
            <person name="Horiuchi T."/>
        </authorList>
    </citation>
    <scope>NUCLEOTIDE SEQUENCE [LARGE SCALE GENOMIC DNA]</scope>
    <source>
        <strain>K12 / W3110 / ATCC 27325 / DSM 5911</strain>
    </source>
</reference>
<reference key="5">
    <citation type="submission" date="1993-10" db="EMBL/GenBank/DDBJ databases">
        <title>Location of cobS and cobT gene sequences on the physical map of the Escherichia coli K-12 chromosome.</title>
        <authorList>
            <person name="Collins C.M."/>
            <person name="Gutman D.M."/>
            <person name="Isaza J."/>
        </authorList>
    </citation>
    <scope>NUCLEOTIDE SEQUENCE [GENOMIC DNA] OF 1-188</scope>
    <source>
        <strain>K12 / DH5-alpha</strain>
    </source>
</reference>